<feature type="chain" id="PRO_1000005415" description="NAD kinase">
    <location>
        <begin position="1"/>
        <end position="284"/>
    </location>
</feature>
<feature type="active site" description="Proton acceptor" evidence="1">
    <location>
        <position position="70"/>
    </location>
</feature>
<feature type="binding site" evidence="1">
    <location>
        <begin position="70"/>
        <end position="71"/>
    </location>
    <ligand>
        <name>NAD(+)</name>
        <dbReference type="ChEBI" id="CHEBI:57540"/>
    </ligand>
</feature>
<feature type="binding site" evidence="1">
    <location>
        <begin position="139"/>
        <end position="140"/>
    </location>
    <ligand>
        <name>NAD(+)</name>
        <dbReference type="ChEBI" id="CHEBI:57540"/>
    </ligand>
</feature>
<feature type="binding site" evidence="1">
    <location>
        <position position="167"/>
    </location>
    <ligand>
        <name>NAD(+)</name>
        <dbReference type="ChEBI" id="CHEBI:57540"/>
    </ligand>
</feature>
<feature type="binding site" evidence="1">
    <location>
        <position position="169"/>
    </location>
    <ligand>
        <name>NAD(+)</name>
        <dbReference type="ChEBI" id="CHEBI:57540"/>
    </ligand>
</feature>
<feature type="binding site" evidence="1">
    <location>
        <position position="177"/>
    </location>
    <ligand>
        <name>NAD(+)</name>
        <dbReference type="ChEBI" id="CHEBI:57540"/>
    </ligand>
</feature>
<feature type="binding site" evidence="1">
    <location>
        <begin position="180"/>
        <end position="185"/>
    </location>
    <ligand>
        <name>NAD(+)</name>
        <dbReference type="ChEBI" id="CHEBI:57540"/>
    </ligand>
</feature>
<feature type="binding site" evidence="1">
    <location>
        <position position="236"/>
    </location>
    <ligand>
        <name>NAD(+)</name>
        <dbReference type="ChEBI" id="CHEBI:57540"/>
    </ligand>
</feature>
<comment type="function">
    <text evidence="1">Involved in the regulation of the intracellular balance of NAD and NADP, and is a key enzyme in the biosynthesis of NADP. Catalyzes specifically the phosphorylation on 2'-hydroxyl of the adenosine moiety of NAD to yield NADP.</text>
</comment>
<comment type="catalytic activity">
    <reaction evidence="1">
        <text>NAD(+) + ATP = ADP + NADP(+) + H(+)</text>
        <dbReference type="Rhea" id="RHEA:18629"/>
        <dbReference type="ChEBI" id="CHEBI:15378"/>
        <dbReference type="ChEBI" id="CHEBI:30616"/>
        <dbReference type="ChEBI" id="CHEBI:57540"/>
        <dbReference type="ChEBI" id="CHEBI:58349"/>
        <dbReference type="ChEBI" id="CHEBI:456216"/>
        <dbReference type="EC" id="2.7.1.23"/>
    </reaction>
</comment>
<comment type="cofactor">
    <cofactor evidence="1">
        <name>a divalent metal cation</name>
        <dbReference type="ChEBI" id="CHEBI:60240"/>
    </cofactor>
</comment>
<comment type="subcellular location">
    <subcellularLocation>
        <location evidence="1">Cytoplasm</location>
    </subcellularLocation>
</comment>
<comment type="similarity">
    <text evidence="1">Belongs to the NAD kinase family.</text>
</comment>
<accession>Q1CR79</accession>
<gene>
    <name evidence="1" type="primary">nadK</name>
    <name type="ordered locus">HPAG1_1476</name>
</gene>
<protein>
    <recommendedName>
        <fullName evidence="1">NAD kinase</fullName>
        <ecNumber evidence="1">2.7.1.23</ecNumber>
    </recommendedName>
    <alternativeName>
        <fullName evidence="1">ATP-dependent NAD kinase</fullName>
    </alternativeName>
</protein>
<name>NADK_HELPH</name>
<reference key="1">
    <citation type="journal article" date="2006" name="Proc. Natl. Acad. Sci. U.S.A.">
        <title>The complete genome sequence of a chronic atrophic gastritis Helicobacter pylori strain: evolution during disease progression.</title>
        <authorList>
            <person name="Oh J.D."/>
            <person name="Kling-Baeckhed H."/>
            <person name="Giannakis M."/>
            <person name="Xu J."/>
            <person name="Fulton R.S."/>
            <person name="Fulton L.A."/>
            <person name="Cordum H.S."/>
            <person name="Wang C."/>
            <person name="Elliott G."/>
            <person name="Edwards J."/>
            <person name="Mardis E.R."/>
            <person name="Engstrand L.G."/>
            <person name="Gordon J.I."/>
        </authorList>
    </citation>
    <scope>NUCLEOTIDE SEQUENCE [LARGE SCALE GENOMIC DNA]</scope>
    <source>
        <strain>HPAG1</strain>
    </source>
</reference>
<organism>
    <name type="scientific">Helicobacter pylori (strain HPAG1)</name>
    <dbReference type="NCBI Taxonomy" id="357544"/>
    <lineage>
        <taxon>Bacteria</taxon>
        <taxon>Pseudomonadati</taxon>
        <taxon>Campylobacterota</taxon>
        <taxon>Epsilonproteobacteria</taxon>
        <taxon>Campylobacterales</taxon>
        <taxon>Helicobacteraceae</taxon>
        <taxon>Helicobacter</taxon>
    </lineage>
</organism>
<proteinExistence type="inferred from homology"/>
<dbReference type="EC" id="2.7.1.23" evidence="1"/>
<dbReference type="EMBL" id="CP000241">
    <property type="protein sequence ID" value="ABF85543.1"/>
    <property type="molecule type" value="Genomic_DNA"/>
</dbReference>
<dbReference type="RefSeq" id="WP_011550145.1">
    <property type="nucleotide sequence ID" value="NC_008086.1"/>
</dbReference>
<dbReference type="SMR" id="Q1CR79"/>
<dbReference type="KEGG" id="hpa:HPAG1_1476"/>
<dbReference type="HOGENOM" id="CLU_008831_0_3_7"/>
<dbReference type="GO" id="GO:0005737">
    <property type="term" value="C:cytoplasm"/>
    <property type="evidence" value="ECO:0007669"/>
    <property type="project" value="UniProtKB-SubCell"/>
</dbReference>
<dbReference type="GO" id="GO:0005524">
    <property type="term" value="F:ATP binding"/>
    <property type="evidence" value="ECO:0007669"/>
    <property type="project" value="UniProtKB-KW"/>
</dbReference>
<dbReference type="GO" id="GO:0046872">
    <property type="term" value="F:metal ion binding"/>
    <property type="evidence" value="ECO:0007669"/>
    <property type="project" value="UniProtKB-UniRule"/>
</dbReference>
<dbReference type="GO" id="GO:0051287">
    <property type="term" value="F:NAD binding"/>
    <property type="evidence" value="ECO:0007669"/>
    <property type="project" value="UniProtKB-ARBA"/>
</dbReference>
<dbReference type="GO" id="GO:0003951">
    <property type="term" value="F:NAD+ kinase activity"/>
    <property type="evidence" value="ECO:0007669"/>
    <property type="project" value="UniProtKB-UniRule"/>
</dbReference>
<dbReference type="GO" id="GO:0019674">
    <property type="term" value="P:NAD metabolic process"/>
    <property type="evidence" value="ECO:0007669"/>
    <property type="project" value="InterPro"/>
</dbReference>
<dbReference type="GO" id="GO:0006741">
    <property type="term" value="P:NADP biosynthetic process"/>
    <property type="evidence" value="ECO:0007669"/>
    <property type="project" value="UniProtKB-UniRule"/>
</dbReference>
<dbReference type="Gene3D" id="3.40.50.10330">
    <property type="entry name" value="Probable inorganic polyphosphate/atp-NAD kinase, domain 1"/>
    <property type="match status" value="1"/>
</dbReference>
<dbReference type="Gene3D" id="2.60.200.30">
    <property type="entry name" value="Probable inorganic polyphosphate/atp-NAD kinase, domain 2"/>
    <property type="match status" value="1"/>
</dbReference>
<dbReference type="HAMAP" id="MF_00361">
    <property type="entry name" value="NAD_kinase"/>
    <property type="match status" value="1"/>
</dbReference>
<dbReference type="InterPro" id="IPR017438">
    <property type="entry name" value="ATP-NAD_kinase_N"/>
</dbReference>
<dbReference type="InterPro" id="IPR017437">
    <property type="entry name" value="ATP-NAD_kinase_PpnK-typ_C"/>
</dbReference>
<dbReference type="InterPro" id="IPR016064">
    <property type="entry name" value="NAD/diacylglycerol_kinase_sf"/>
</dbReference>
<dbReference type="InterPro" id="IPR002504">
    <property type="entry name" value="NADK"/>
</dbReference>
<dbReference type="PANTHER" id="PTHR20275">
    <property type="entry name" value="NAD KINASE"/>
    <property type="match status" value="1"/>
</dbReference>
<dbReference type="PANTHER" id="PTHR20275:SF0">
    <property type="entry name" value="NAD KINASE"/>
    <property type="match status" value="1"/>
</dbReference>
<dbReference type="Pfam" id="PF01513">
    <property type="entry name" value="NAD_kinase"/>
    <property type="match status" value="1"/>
</dbReference>
<dbReference type="Pfam" id="PF20143">
    <property type="entry name" value="NAD_kinase_C"/>
    <property type="match status" value="1"/>
</dbReference>
<dbReference type="SUPFAM" id="SSF111331">
    <property type="entry name" value="NAD kinase/diacylglycerol kinase-like"/>
    <property type="match status" value="1"/>
</dbReference>
<sequence>MKDSYQTIGVFVRPTHYQNPLFEELEQAKEWVLKLLEDEGFESFMIDSLDGAKDARLIEKAYAFLCLGGDGTILGALRMTHSYNKPCFGVRIGNLGFLSAVELNGLKDFLQDLKQNRIKLEEHLALEGRIGKTSFYAINEIVIAKKKALGVLDIKAYVGHTPFNTYKGDGLIIATPLGSTAYNLSAHGPIVHALSQSYILTPLCDFSLTQRPLVLGAEFCLNFCAHEDALVVIDGQATYDLKANQPLYIQKSPTTTKLLQKNSRDYFKVLKEKLLWGESPSKKR</sequence>
<keyword id="KW-0067">ATP-binding</keyword>
<keyword id="KW-0963">Cytoplasm</keyword>
<keyword id="KW-0418">Kinase</keyword>
<keyword id="KW-0520">NAD</keyword>
<keyword id="KW-0521">NADP</keyword>
<keyword id="KW-0547">Nucleotide-binding</keyword>
<keyword id="KW-0808">Transferase</keyword>
<evidence type="ECO:0000255" key="1">
    <source>
        <dbReference type="HAMAP-Rule" id="MF_00361"/>
    </source>
</evidence>